<reference key="1">
    <citation type="submission" date="2008-04" db="EMBL/GenBank/DDBJ databases">
        <title>Complete sequence of chromosome of Exiguobacterium sibiricum 255-15.</title>
        <authorList>
            <consortium name="US DOE Joint Genome Institute"/>
            <person name="Copeland A."/>
            <person name="Lucas S."/>
            <person name="Lapidus A."/>
            <person name="Glavina del Rio T."/>
            <person name="Dalin E."/>
            <person name="Tice H."/>
            <person name="Bruce D."/>
            <person name="Goodwin L."/>
            <person name="Pitluck S."/>
            <person name="Kiss H."/>
            <person name="Chertkov O."/>
            <person name="Monk C."/>
            <person name="Brettin T."/>
            <person name="Detter J.C."/>
            <person name="Han C."/>
            <person name="Kuske C.R."/>
            <person name="Schmutz J."/>
            <person name="Larimer F."/>
            <person name="Land M."/>
            <person name="Hauser L."/>
            <person name="Kyrpides N."/>
            <person name="Mikhailova N."/>
            <person name="Vishnivetskaya T."/>
            <person name="Rodrigues D.F."/>
            <person name="Gilichinsky D."/>
            <person name="Tiedje J."/>
            <person name="Richardson P."/>
        </authorList>
    </citation>
    <scope>NUCLEOTIDE SEQUENCE [LARGE SCALE GENOMIC DNA]</scope>
    <source>
        <strain>DSM 17290 / CCUG 55495 / CIP 109462 / JCM 13490 / 255-15</strain>
    </source>
</reference>
<proteinExistence type="inferred from homology"/>
<feature type="chain" id="PRO_1000191422" description="UDP-N-acetylenolpyruvoylglucosamine reductase">
    <location>
        <begin position="1"/>
        <end position="304"/>
    </location>
</feature>
<feature type="domain" description="FAD-binding PCMH-type" evidence="1">
    <location>
        <begin position="33"/>
        <end position="212"/>
    </location>
</feature>
<feature type="active site" evidence="1">
    <location>
        <position position="176"/>
    </location>
</feature>
<feature type="active site" description="Proton donor" evidence="1">
    <location>
        <position position="226"/>
    </location>
</feature>
<feature type="active site" evidence="1">
    <location>
        <position position="296"/>
    </location>
</feature>
<comment type="function">
    <text evidence="1">Cell wall formation.</text>
</comment>
<comment type="catalytic activity">
    <reaction evidence="1">
        <text>UDP-N-acetyl-alpha-D-muramate + NADP(+) = UDP-N-acetyl-3-O-(1-carboxyvinyl)-alpha-D-glucosamine + NADPH + H(+)</text>
        <dbReference type="Rhea" id="RHEA:12248"/>
        <dbReference type="ChEBI" id="CHEBI:15378"/>
        <dbReference type="ChEBI" id="CHEBI:57783"/>
        <dbReference type="ChEBI" id="CHEBI:58349"/>
        <dbReference type="ChEBI" id="CHEBI:68483"/>
        <dbReference type="ChEBI" id="CHEBI:70757"/>
        <dbReference type="EC" id="1.3.1.98"/>
    </reaction>
</comment>
<comment type="cofactor">
    <cofactor evidence="1">
        <name>FAD</name>
        <dbReference type="ChEBI" id="CHEBI:57692"/>
    </cofactor>
</comment>
<comment type="pathway">
    <text evidence="1">Cell wall biogenesis; peptidoglycan biosynthesis.</text>
</comment>
<comment type="subcellular location">
    <subcellularLocation>
        <location evidence="1">Cytoplasm</location>
    </subcellularLocation>
</comment>
<comment type="similarity">
    <text evidence="1">Belongs to the MurB family.</text>
</comment>
<keyword id="KW-0131">Cell cycle</keyword>
<keyword id="KW-0132">Cell division</keyword>
<keyword id="KW-0133">Cell shape</keyword>
<keyword id="KW-0961">Cell wall biogenesis/degradation</keyword>
<keyword id="KW-0963">Cytoplasm</keyword>
<keyword id="KW-0274">FAD</keyword>
<keyword id="KW-0285">Flavoprotein</keyword>
<keyword id="KW-0521">NADP</keyword>
<keyword id="KW-0560">Oxidoreductase</keyword>
<keyword id="KW-0573">Peptidoglycan synthesis</keyword>
<keyword id="KW-1185">Reference proteome</keyword>
<dbReference type="EC" id="1.3.1.98" evidence="1"/>
<dbReference type="EMBL" id="CP001022">
    <property type="protein sequence ID" value="ACB60033.1"/>
    <property type="molecule type" value="Genomic_DNA"/>
</dbReference>
<dbReference type="RefSeq" id="WP_012369457.1">
    <property type="nucleotide sequence ID" value="NC_010556.1"/>
</dbReference>
<dbReference type="SMR" id="B1YJK3"/>
<dbReference type="STRING" id="262543.Exig_0552"/>
<dbReference type="KEGG" id="esi:Exig_0552"/>
<dbReference type="eggNOG" id="COG0812">
    <property type="taxonomic scope" value="Bacteria"/>
</dbReference>
<dbReference type="HOGENOM" id="CLU_035304_1_1_9"/>
<dbReference type="OrthoDB" id="9804753at2"/>
<dbReference type="UniPathway" id="UPA00219"/>
<dbReference type="Proteomes" id="UP000001681">
    <property type="component" value="Chromosome"/>
</dbReference>
<dbReference type="GO" id="GO:0005829">
    <property type="term" value="C:cytosol"/>
    <property type="evidence" value="ECO:0007669"/>
    <property type="project" value="TreeGrafter"/>
</dbReference>
<dbReference type="GO" id="GO:0071949">
    <property type="term" value="F:FAD binding"/>
    <property type="evidence" value="ECO:0007669"/>
    <property type="project" value="InterPro"/>
</dbReference>
<dbReference type="GO" id="GO:0008762">
    <property type="term" value="F:UDP-N-acetylmuramate dehydrogenase activity"/>
    <property type="evidence" value="ECO:0007669"/>
    <property type="project" value="UniProtKB-UniRule"/>
</dbReference>
<dbReference type="GO" id="GO:0051301">
    <property type="term" value="P:cell division"/>
    <property type="evidence" value="ECO:0007669"/>
    <property type="project" value="UniProtKB-KW"/>
</dbReference>
<dbReference type="GO" id="GO:0071555">
    <property type="term" value="P:cell wall organization"/>
    <property type="evidence" value="ECO:0007669"/>
    <property type="project" value="UniProtKB-KW"/>
</dbReference>
<dbReference type="GO" id="GO:0009252">
    <property type="term" value="P:peptidoglycan biosynthetic process"/>
    <property type="evidence" value="ECO:0007669"/>
    <property type="project" value="UniProtKB-UniRule"/>
</dbReference>
<dbReference type="GO" id="GO:0008360">
    <property type="term" value="P:regulation of cell shape"/>
    <property type="evidence" value="ECO:0007669"/>
    <property type="project" value="UniProtKB-KW"/>
</dbReference>
<dbReference type="Gene3D" id="3.30.465.10">
    <property type="match status" value="1"/>
</dbReference>
<dbReference type="Gene3D" id="3.90.78.10">
    <property type="entry name" value="UDP-N-acetylenolpyruvoylglucosamine reductase, C-terminal domain"/>
    <property type="match status" value="1"/>
</dbReference>
<dbReference type="Gene3D" id="3.30.43.10">
    <property type="entry name" value="Uridine Diphospho-n-acetylenolpyruvylglucosamine Reductase, domain 2"/>
    <property type="match status" value="1"/>
</dbReference>
<dbReference type="HAMAP" id="MF_00037">
    <property type="entry name" value="MurB"/>
    <property type="match status" value="1"/>
</dbReference>
<dbReference type="InterPro" id="IPR016166">
    <property type="entry name" value="FAD-bd_PCMH"/>
</dbReference>
<dbReference type="InterPro" id="IPR036318">
    <property type="entry name" value="FAD-bd_PCMH-like_sf"/>
</dbReference>
<dbReference type="InterPro" id="IPR016167">
    <property type="entry name" value="FAD-bd_PCMH_sub1"/>
</dbReference>
<dbReference type="InterPro" id="IPR016169">
    <property type="entry name" value="FAD-bd_PCMH_sub2"/>
</dbReference>
<dbReference type="InterPro" id="IPR003170">
    <property type="entry name" value="MurB"/>
</dbReference>
<dbReference type="InterPro" id="IPR011601">
    <property type="entry name" value="MurB_C"/>
</dbReference>
<dbReference type="InterPro" id="IPR036635">
    <property type="entry name" value="MurB_C_sf"/>
</dbReference>
<dbReference type="InterPro" id="IPR006094">
    <property type="entry name" value="Oxid_FAD_bind_N"/>
</dbReference>
<dbReference type="NCBIfam" id="TIGR00179">
    <property type="entry name" value="murB"/>
    <property type="match status" value="1"/>
</dbReference>
<dbReference type="NCBIfam" id="NF010480">
    <property type="entry name" value="PRK13905.1"/>
    <property type="match status" value="1"/>
</dbReference>
<dbReference type="PANTHER" id="PTHR21071">
    <property type="entry name" value="UDP-N-ACETYLENOLPYRUVOYLGLUCOSAMINE REDUCTASE"/>
    <property type="match status" value="1"/>
</dbReference>
<dbReference type="PANTHER" id="PTHR21071:SF4">
    <property type="entry name" value="UDP-N-ACETYLENOLPYRUVOYLGLUCOSAMINE REDUCTASE"/>
    <property type="match status" value="1"/>
</dbReference>
<dbReference type="Pfam" id="PF01565">
    <property type="entry name" value="FAD_binding_4"/>
    <property type="match status" value="1"/>
</dbReference>
<dbReference type="Pfam" id="PF02873">
    <property type="entry name" value="MurB_C"/>
    <property type="match status" value="1"/>
</dbReference>
<dbReference type="SUPFAM" id="SSF56176">
    <property type="entry name" value="FAD-binding/transporter-associated domain-like"/>
    <property type="match status" value="1"/>
</dbReference>
<dbReference type="SUPFAM" id="SSF56194">
    <property type="entry name" value="Uridine diphospho-N-Acetylenolpyruvylglucosamine reductase, MurB, C-terminal domain"/>
    <property type="match status" value="1"/>
</dbReference>
<dbReference type="PROSITE" id="PS51387">
    <property type="entry name" value="FAD_PCMH"/>
    <property type="match status" value="1"/>
</dbReference>
<accession>B1YJK3</accession>
<organism>
    <name type="scientific">Exiguobacterium sibiricum (strain DSM 17290 / CCUG 55495 / CIP 109462 / JCM 13490 / 255-15)</name>
    <dbReference type="NCBI Taxonomy" id="262543"/>
    <lineage>
        <taxon>Bacteria</taxon>
        <taxon>Bacillati</taxon>
        <taxon>Bacillota</taxon>
        <taxon>Bacilli</taxon>
        <taxon>Bacillales</taxon>
        <taxon>Bacillales Family XII. Incertae Sedis</taxon>
        <taxon>Exiguobacterium</taxon>
    </lineage>
</organism>
<evidence type="ECO:0000255" key="1">
    <source>
        <dbReference type="HAMAP-Rule" id="MF_00037"/>
    </source>
</evidence>
<protein>
    <recommendedName>
        <fullName evidence="1">UDP-N-acetylenolpyruvoylglucosamine reductase</fullName>
        <ecNumber evidence="1">1.3.1.98</ecNumber>
    </recommendedName>
    <alternativeName>
        <fullName evidence="1">UDP-N-acetylmuramate dehydrogenase</fullName>
    </alternativeName>
</protein>
<name>MURB_EXIS2</name>
<gene>
    <name evidence="1" type="primary">murB</name>
    <name type="ordered locus">Exig_0552</name>
</gene>
<sequence length="304" mass="33098">MMTEQLLAGLYEGIAKEAVLINEPLKNHTYTKMGGLADLFLIPSTYEETAFAVRYAYEHDLPLTMLGNGSNLVVRDGGIRGIVLSFEKLTDISVEGHELIAQSGAAIIQASRIAYDHALSGLEFACGIPGTIGGALIMNAGAYGGEVKDCLHSATVLTRKGELLNISHEELELGYRTSCFSKKEYIILEGRFSLTEGDPALIKEMMDDLTHKRETKQPLEYPSCGSVFKRPEGYFAGKLIQDSGLQGARIGGAEVSQKHAGFIVNIKDATATDYISLIRHVQETVQEKFGILLEPEVKIIGEEA</sequence>